<accession>B0CK73</accession>
<proteinExistence type="inferred from homology"/>
<keyword id="KW-0066">ATP synthesis</keyword>
<keyword id="KW-0997">Cell inner membrane</keyword>
<keyword id="KW-1003">Cell membrane</keyword>
<keyword id="KW-0138">CF(0)</keyword>
<keyword id="KW-0375">Hydrogen ion transport</keyword>
<keyword id="KW-0406">Ion transport</keyword>
<keyword id="KW-0472">Membrane</keyword>
<keyword id="KW-0812">Transmembrane</keyword>
<keyword id="KW-1133">Transmembrane helix</keyword>
<keyword id="KW-0813">Transport</keyword>
<organism>
    <name type="scientific">Brucella suis (strain ATCC 23445 / NCTC 10510)</name>
    <dbReference type="NCBI Taxonomy" id="470137"/>
    <lineage>
        <taxon>Bacteria</taxon>
        <taxon>Pseudomonadati</taxon>
        <taxon>Pseudomonadota</taxon>
        <taxon>Alphaproteobacteria</taxon>
        <taxon>Hyphomicrobiales</taxon>
        <taxon>Brucellaceae</taxon>
        <taxon>Brucella/Ochrobactrum group</taxon>
        <taxon>Brucella</taxon>
    </lineage>
</organism>
<feature type="chain" id="PRO_0000368377" description="ATP synthase subunit b 2">
    <location>
        <begin position="1"/>
        <end position="159"/>
    </location>
</feature>
<feature type="transmembrane region" description="Helical" evidence="1">
    <location>
        <begin position="1"/>
        <end position="21"/>
    </location>
</feature>
<gene>
    <name evidence="1" type="primary">atpF2</name>
    <name type="ordered locus">BSUIS_A0413</name>
</gene>
<comment type="function">
    <text evidence="1">F(1)F(0) ATP synthase produces ATP from ADP in the presence of a proton or sodium gradient. F-type ATPases consist of two structural domains, F(1) containing the extramembraneous catalytic core and F(0) containing the membrane proton channel, linked together by a central stalk and a peripheral stalk. During catalysis, ATP synthesis in the catalytic domain of F(1) is coupled via a rotary mechanism of the central stalk subunits to proton translocation.</text>
</comment>
<comment type="function">
    <text evidence="1">Component of the F(0) channel, it forms part of the peripheral stalk, linking F(1) to F(0).</text>
</comment>
<comment type="subunit">
    <text evidence="1">F-type ATPases have 2 components, F(1) - the catalytic core - and F(0) - the membrane proton channel. F(1) has five subunits: alpha(3), beta(3), gamma(1), delta(1), epsilon(1). F(0) has three main subunits: a(1), b(2) and c(10-14). The alpha and beta chains form an alternating ring which encloses part of the gamma chain. F(1) is attached to F(0) by a central stalk formed by the gamma and epsilon chains, while a peripheral stalk is formed by the delta and b chains.</text>
</comment>
<comment type="subcellular location">
    <subcellularLocation>
        <location evidence="1">Cell inner membrane</location>
        <topology evidence="1">Single-pass membrane protein</topology>
    </subcellularLocation>
</comment>
<comment type="similarity">
    <text evidence="1">Belongs to the ATPase B chain family.</text>
</comment>
<dbReference type="EMBL" id="CP000911">
    <property type="protein sequence ID" value="ABY37503.1"/>
    <property type="molecule type" value="Genomic_DNA"/>
</dbReference>
<dbReference type="RefSeq" id="WP_004683014.1">
    <property type="nucleotide sequence ID" value="NC_010169.1"/>
</dbReference>
<dbReference type="SMR" id="B0CK73"/>
<dbReference type="KEGG" id="bmt:BSUIS_A0413"/>
<dbReference type="HOGENOM" id="CLU_079215_6_1_5"/>
<dbReference type="Proteomes" id="UP000008545">
    <property type="component" value="Chromosome I"/>
</dbReference>
<dbReference type="GO" id="GO:0005886">
    <property type="term" value="C:plasma membrane"/>
    <property type="evidence" value="ECO:0007669"/>
    <property type="project" value="UniProtKB-SubCell"/>
</dbReference>
<dbReference type="GO" id="GO:0045259">
    <property type="term" value="C:proton-transporting ATP synthase complex"/>
    <property type="evidence" value="ECO:0007669"/>
    <property type="project" value="UniProtKB-KW"/>
</dbReference>
<dbReference type="GO" id="GO:0046933">
    <property type="term" value="F:proton-transporting ATP synthase activity, rotational mechanism"/>
    <property type="evidence" value="ECO:0007669"/>
    <property type="project" value="UniProtKB-UniRule"/>
</dbReference>
<dbReference type="GO" id="GO:0046961">
    <property type="term" value="F:proton-transporting ATPase activity, rotational mechanism"/>
    <property type="evidence" value="ECO:0007669"/>
    <property type="project" value="TreeGrafter"/>
</dbReference>
<dbReference type="CDD" id="cd06503">
    <property type="entry name" value="ATP-synt_Fo_b"/>
    <property type="match status" value="1"/>
</dbReference>
<dbReference type="HAMAP" id="MF_01398">
    <property type="entry name" value="ATP_synth_b_bprime"/>
    <property type="match status" value="1"/>
</dbReference>
<dbReference type="InterPro" id="IPR002146">
    <property type="entry name" value="ATP_synth_b/b'su_bac/chlpt"/>
</dbReference>
<dbReference type="InterPro" id="IPR050059">
    <property type="entry name" value="ATP_synthase_B_chain"/>
</dbReference>
<dbReference type="NCBIfam" id="NF006611">
    <property type="entry name" value="PRK09173.1"/>
    <property type="match status" value="1"/>
</dbReference>
<dbReference type="PANTHER" id="PTHR33445:SF1">
    <property type="entry name" value="ATP SYNTHASE SUBUNIT B"/>
    <property type="match status" value="1"/>
</dbReference>
<dbReference type="PANTHER" id="PTHR33445">
    <property type="entry name" value="ATP SYNTHASE SUBUNIT B', CHLOROPLASTIC"/>
    <property type="match status" value="1"/>
</dbReference>
<dbReference type="Pfam" id="PF00430">
    <property type="entry name" value="ATP-synt_B"/>
    <property type="match status" value="1"/>
</dbReference>
<name>ATPF2_BRUSI</name>
<reference key="1">
    <citation type="submission" date="2007-12" db="EMBL/GenBank/DDBJ databases">
        <title>Brucella suis ATCC 23445 whole genome shotgun sequencing project.</title>
        <authorList>
            <person name="Setubal J.C."/>
            <person name="Bowns C."/>
            <person name="Boyle S."/>
            <person name="Crasta O.R."/>
            <person name="Czar M.J."/>
            <person name="Dharmanolla C."/>
            <person name="Gillespie J.J."/>
            <person name="Kenyon R.W."/>
            <person name="Lu J."/>
            <person name="Mane S."/>
            <person name="Mohapatra S."/>
            <person name="Nagrani S."/>
            <person name="Purkayastha A."/>
            <person name="Rajasimha H.K."/>
            <person name="Shallom J.M."/>
            <person name="Shallom S."/>
            <person name="Shukla M."/>
            <person name="Snyder E.E."/>
            <person name="Sobral B.W."/>
            <person name="Wattam A.R."/>
            <person name="Will R."/>
            <person name="Williams K."/>
            <person name="Yoo H."/>
            <person name="Bruce D."/>
            <person name="Detter C."/>
            <person name="Munk C."/>
            <person name="Brettin T.S."/>
        </authorList>
    </citation>
    <scope>NUCLEOTIDE SEQUENCE [LARGE SCALE GENOMIC DNA]</scope>
    <source>
        <strain>ATCC 23445 / NCTC 10510</strain>
    </source>
</reference>
<evidence type="ECO:0000255" key="1">
    <source>
        <dbReference type="HAMAP-Rule" id="MF_01398"/>
    </source>
</evidence>
<protein>
    <recommendedName>
        <fullName evidence="1">ATP synthase subunit b 2</fullName>
    </recommendedName>
    <alternativeName>
        <fullName evidence="1">ATP synthase F(0) sector subunit b 2</fullName>
    </alternativeName>
    <alternativeName>
        <fullName evidence="1">ATPase subunit I 2</fullName>
    </alternativeName>
    <alternativeName>
        <fullName evidence="1">F-type ATPase subunit b 2</fullName>
        <shortName evidence="1">F-ATPase subunit b 2</shortName>
    </alternativeName>
</protein>
<sequence length="159" mass="17494">MDATFWAFIALVIFVAIVVYMKVPGMIGRTLDERADRIKKELEEARTLREEAQQLLAEYHRKRKEAEKEAGDIVASAEREAKALLEEAKRATEEYVARRNKLAEQKIATAETDAINAVRASAVDLAVAAAGSILAEKVDAKAAGNLFNDALAQVKSHLN</sequence>